<proteinExistence type="inferred from homology"/>
<protein>
    <recommendedName>
        <fullName evidence="1">Co-chaperonin GroES</fullName>
    </recommendedName>
    <alternativeName>
        <fullName evidence="1">10 kDa chaperonin</fullName>
    </alternativeName>
    <alternativeName>
        <fullName evidence="1">Chaperonin-10</fullName>
        <shortName evidence="1">Cpn10</shortName>
    </alternativeName>
</protein>
<evidence type="ECO:0000255" key="1">
    <source>
        <dbReference type="HAMAP-Rule" id="MF_00580"/>
    </source>
</evidence>
<accession>B5F2K9</accession>
<gene>
    <name evidence="1" type="primary">groES</name>
    <name evidence="1" type="synonym">groS</name>
    <name type="ordered locus">SeAg_B4607</name>
</gene>
<sequence length="97" mass="10318">MSIRPLHDRVIVKRKEVESKSAGGIVLTGSAAGKSTRGEIIAVGKGRILDNGTVQPLDVKVGDIVIFNDGYGVKSEKIDNEEVLIMSESDILAIVEA</sequence>
<feature type="chain" id="PRO_1000129698" description="Co-chaperonin GroES">
    <location>
        <begin position="1"/>
        <end position="97"/>
    </location>
</feature>
<comment type="function">
    <text evidence="1">Together with the chaperonin GroEL, plays an essential role in assisting protein folding. The GroEL-GroES system forms a nano-cage that allows encapsulation of the non-native substrate proteins and provides a physical environment optimized to promote and accelerate protein folding. GroES binds to the apical surface of the GroEL ring, thereby capping the opening of the GroEL channel.</text>
</comment>
<comment type="subunit">
    <text evidence="1">Heptamer of 7 subunits arranged in a ring. Interacts with the chaperonin GroEL.</text>
</comment>
<comment type="subcellular location">
    <subcellularLocation>
        <location evidence="1">Cytoplasm</location>
    </subcellularLocation>
</comment>
<comment type="similarity">
    <text evidence="1">Belongs to the GroES chaperonin family.</text>
</comment>
<dbReference type="EMBL" id="CP001138">
    <property type="protein sequence ID" value="ACH51941.1"/>
    <property type="molecule type" value="Genomic_DNA"/>
</dbReference>
<dbReference type="RefSeq" id="WP_000027827.1">
    <property type="nucleotide sequence ID" value="NC_011149.1"/>
</dbReference>
<dbReference type="SMR" id="B5F2K9"/>
<dbReference type="KEGG" id="sea:SeAg_B4607"/>
<dbReference type="HOGENOM" id="CLU_132825_1_1_6"/>
<dbReference type="Proteomes" id="UP000008819">
    <property type="component" value="Chromosome"/>
</dbReference>
<dbReference type="GO" id="GO:0005737">
    <property type="term" value="C:cytoplasm"/>
    <property type="evidence" value="ECO:0007669"/>
    <property type="project" value="UniProtKB-SubCell"/>
</dbReference>
<dbReference type="GO" id="GO:0005524">
    <property type="term" value="F:ATP binding"/>
    <property type="evidence" value="ECO:0007669"/>
    <property type="project" value="InterPro"/>
</dbReference>
<dbReference type="GO" id="GO:0046872">
    <property type="term" value="F:metal ion binding"/>
    <property type="evidence" value="ECO:0007669"/>
    <property type="project" value="TreeGrafter"/>
</dbReference>
<dbReference type="GO" id="GO:0044183">
    <property type="term" value="F:protein folding chaperone"/>
    <property type="evidence" value="ECO:0007669"/>
    <property type="project" value="InterPro"/>
</dbReference>
<dbReference type="GO" id="GO:0051087">
    <property type="term" value="F:protein-folding chaperone binding"/>
    <property type="evidence" value="ECO:0007669"/>
    <property type="project" value="TreeGrafter"/>
</dbReference>
<dbReference type="GO" id="GO:0051082">
    <property type="term" value="F:unfolded protein binding"/>
    <property type="evidence" value="ECO:0007669"/>
    <property type="project" value="TreeGrafter"/>
</dbReference>
<dbReference type="GO" id="GO:0051085">
    <property type="term" value="P:chaperone cofactor-dependent protein refolding"/>
    <property type="evidence" value="ECO:0007669"/>
    <property type="project" value="TreeGrafter"/>
</dbReference>
<dbReference type="CDD" id="cd00320">
    <property type="entry name" value="cpn10"/>
    <property type="match status" value="1"/>
</dbReference>
<dbReference type="FunFam" id="2.30.33.40:FF:000001">
    <property type="entry name" value="10 kDa chaperonin"/>
    <property type="match status" value="1"/>
</dbReference>
<dbReference type="Gene3D" id="2.30.33.40">
    <property type="entry name" value="GroES chaperonin"/>
    <property type="match status" value="1"/>
</dbReference>
<dbReference type="HAMAP" id="MF_00580">
    <property type="entry name" value="CH10"/>
    <property type="match status" value="1"/>
</dbReference>
<dbReference type="InterPro" id="IPR020818">
    <property type="entry name" value="Chaperonin_GroES"/>
</dbReference>
<dbReference type="InterPro" id="IPR037124">
    <property type="entry name" value="Chaperonin_GroES_sf"/>
</dbReference>
<dbReference type="InterPro" id="IPR018369">
    <property type="entry name" value="Chaprnonin_Cpn10_CS"/>
</dbReference>
<dbReference type="InterPro" id="IPR011032">
    <property type="entry name" value="GroES-like_sf"/>
</dbReference>
<dbReference type="NCBIfam" id="NF001526">
    <property type="entry name" value="PRK00364.1-1"/>
    <property type="match status" value="1"/>
</dbReference>
<dbReference type="NCBIfam" id="NF001527">
    <property type="entry name" value="PRK00364.1-2"/>
    <property type="match status" value="1"/>
</dbReference>
<dbReference type="NCBIfam" id="NF001531">
    <property type="entry name" value="PRK00364.2-2"/>
    <property type="match status" value="1"/>
</dbReference>
<dbReference type="PANTHER" id="PTHR10772">
    <property type="entry name" value="10 KDA HEAT SHOCK PROTEIN"/>
    <property type="match status" value="1"/>
</dbReference>
<dbReference type="PANTHER" id="PTHR10772:SF58">
    <property type="entry name" value="CO-CHAPERONIN GROES"/>
    <property type="match status" value="1"/>
</dbReference>
<dbReference type="Pfam" id="PF00166">
    <property type="entry name" value="Cpn10"/>
    <property type="match status" value="1"/>
</dbReference>
<dbReference type="PRINTS" id="PR00297">
    <property type="entry name" value="CHAPERONIN10"/>
</dbReference>
<dbReference type="SMART" id="SM00883">
    <property type="entry name" value="Cpn10"/>
    <property type="match status" value="1"/>
</dbReference>
<dbReference type="SUPFAM" id="SSF50129">
    <property type="entry name" value="GroES-like"/>
    <property type="match status" value="1"/>
</dbReference>
<dbReference type="PROSITE" id="PS00681">
    <property type="entry name" value="CHAPERONINS_CPN10"/>
    <property type="match status" value="1"/>
</dbReference>
<keyword id="KW-0143">Chaperone</keyword>
<keyword id="KW-0963">Cytoplasm</keyword>
<reference key="1">
    <citation type="journal article" date="2011" name="J. Bacteriol.">
        <title>Comparative genomics of 28 Salmonella enterica isolates: evidence for CRISPR-mediated adaptive sublineage evolution.</title>
        <authorList>
            <person name="Fricke W.F."/>
            <person name="Mammel M.K."/>
            <person name="McDermott P.F."/>
            <person name="Tartera C."/>
            <person name="White D.G."/>
            <person name="Leclerc J.E."/>
            <person name="Ravel J."/>
            <person name="Cebula T.A."/>
        </authorList>
    </citation>
    <scope>NUCLEOTIDE SEQUENCE [LARGE SCALE GENOMIC DNA]</scope>
    <source>
        <strain>SL483</strain>
    </source>
</reference>
<organism>
    <name type="scientific">Salmonella agona (strain SL483)</name>
    <dbReference type="NCBI Taxonomy" id="454166"/>
    <lineage>
        <taxon>Bacteria</taxon>
        <taxon>Pseudomonadati</taxon>
        <taxon>Pseudomonadota</taxon>
        <taxon>Gammaproteobacteria</taxon>
        <taxon>Enterobacterales</taxon>
        <taxon>Enterobacteriaceae</taxon>
        <taxon>Salmonella</taxon>
    </lineage>
</organism>
<name>CH10_SALA4</name>